<reference key="1">
    <citation type="journal article" date="2009" name="PLoS Genet.">
        <title>Adaptations to submarine hydrothermal environments exemplified by the genome of Nautilia profundicola.</title>
        <authorList>
            <person name="Campbell B.J."/>
            <person name="Smith J.L."/>
            <person name="Hanson T.E."/>
            <person name="Klotz M.G."/>
            <person name="Stein L.Y."/>
            <person name="Lee C.K."/>
            <person name="Wu D."/>
            <person name="Robinson J.M."/>
            <person name="Khouri H.M."/>
            <person name="Eisen J.A."/>
            <person name="Cary S.C."/>
        </authorList>
    </citation>
    <scope>NUCLEOTIDE SEQUENCE [LARGE SCALE GENOMIC DNA]</scope>
    <source>
        <strain>ATCC BAA-1463 / DSM 18972 / AmH</strain>
    </source>
</reference>
<comment type="function">
    <text evidence="1">The RuvA-RuvB-RuvC complex processes Holliday junction (HJ) DNA during genetic recombination and DNA repair, while the RuvA-RuvB complex plays an important role in the rescue of blocked DNA replication forks via replication fork reversal (RFR). RuvA specifically binds to HJ cruciform DNA, conferring on it an open structure. The RuvB hexamer acts as an ATP-dependent pump, pulling dsDNA into and through the RuvAB complex. HJ branch migration allows RuvC to scan DNA until it finds its consensus sequence, where it cleaves and resolves the cruciform DNA.</text>
</comment>
<comment type="subunit">
    <text evidence="1">Homotetramer. Forms an RuvA(8)-RuvB(12)-Holliday junction (HJ) complex. HJ DNA is sandwiched between 2 RuvA tetramers; dsDNA enters through RuvA and exits via RuvB. An RuvB hexamer assembles on each DNA strand where it exits the tetramer. Each RuvB hexamer is contacted by two RuvA subunits (via domain III) on 2 adjacent RuvB subunits; this complex drives branch migration. In the full resolvosome a probable DNA-RuvA(4)-RuvB(12)-RuvC(2) complex forms which resolves the HJ.</text>
</comment>
<comment type="subcellular location">
    <subcellularLocation>
        <location evidence="1">Cytoplasm</location>
    </subcellularLocation>
</comment>
<comment type="domain">
    <text evidence="1">Has three domains with a flexible linker between the domains II and III and assumes an 'L' shape. Domain III is highly mobile and contacts RuvB.</text>
</comment>
<comment type="similarity">
    <text evidence="1">Belongs to the RuvA family.</text>
</comment>
<name>RUVA_NAUPA</name>
<gene>
    <name evidence="1" type="primary">ruvA</name>
    <name type="ordered locus">NAMH_0946</name>
</gene>
<evidence type="ECO:0000255" key="1">
    <source>
        <dbReference type="HAMAP-Rule" id="MF_00031"/>
    </source>
</evidence>
<feature type="chain" id="PRO_1000195166" description="Holliday junction branch migration complex subunit RuvA">
    <location>
        <begin position="1"/>
        <end position="184"/>
    </location>
</feature>
<feature type="region of interest" description="Domain I" evidence="1">
    <location>
        <begin position="1"/>
        <end position="61"/>
    </location>
</feature>
<feature type="region of interest" description="Domain II" evidence="1">
    <location>
        <begin position="62"/>
        <end position="135"/>
    </location>
</feature>
<feature type="region of interest" description="Domain III" evidence="1">
    <location>
        <begin position="135"/>
        <end position="184"/>
    </location>
</feature>
<feature type="region of interest" description="Flexible linker" evidence="1">
    <location>
        <position position="135"/>
    </location>
</feature>
<sequence length="184" mass="20494">MIAALRGNIFEKDGGKILLDVNNVIYELNVSMITFSSVNDKGLFYITEIIKENEYTLYGFADKNEKKLFDSLIKLNGVGPKVALAICSTYTPQTFMDIIANHDINALKKIPGIGPKSAKRILMEMGEFEVVFEEQNPVFNQALSALESLGFNKNDIVKALNGIKSDNLEETIKLALKKLSKDIK</sequence>
<keyword id="KW-0963">Cytoplasm</keyword>
<keyword id="KW-0227">DNA damage</keyword>
<keyword id="KW-0233">DNA recombination</keyword>
<keyword id="KW-0234">DNA repair</keyword>
<keyword id="KW-0238">DNA-binding</keyword>
<protein>
    <recommendedName>
        <fullName evidence="1">Holliday junction branch migration complex subunit RuvA</fullName>
    </recommendedName>
</protein>
<organism>
    <name type="scientific">Nautilia profundicola (strain ATCC BAA-1463 / DSM 18972 / AmH)</name>
    <dbReference type="NCBI Taxonomy" id="598659"/>
    <lineage>
        <taxon>Bacteria</taxon>
        <taxon>Pseudomonadati</taxon>
        <taxon>Campylobacterota</taxon>
        <taxon>Epsilonproteobacteria</taxon>
        <taxon>Nautiliales</taxon>
        <taxon>Nautiliaceae</taxon>
        <taxon>Nautilia</taxon>
    </lineage>
</organism>
<dbReference type="EMBL" id="CP001279">
    <property type="protein sequence ID" value="ACM92838.1"/>
    <property type="molecule type" value="Genomic_DNA"/>
</dbReference>
<dbReference type="RefSeq" id="WP_015901890.1">
    <property type="nucleotide sequence ID" value="NC_012115.1"/>
</dbReference>
<dbReference type="SMR" id="B9L9P0"/>
<dbReference type="STRING" id="598659.NAMH_0946"/>
<dbReference type="KEGG" id="nam:NAMH_0946"/>
<dbReference type="eggNOG" id="COG0632">
    <property type="taxonomic scope" value="Bacteria"/>
</dbReference>
<dbReference type="HOGENOM" id="CLU_087936_3_1_7"/>
<dbReference type="OrthoDB" id="5293449at2"/>
<dbReference type="Proteomes" id="UP000000448">
    <property type="component" value="Chromosome"/>
</dbReference>
<dbReference type="GO" id="GO:0005737">
    <property type="term" value="C:cytoplasm"/>
    <property type="evidence" value="ECO:0007669"/>
    <property type="project" value="UniProtKB-SubCell"/>
</dbReference>
<dbReference type="GO" id="GO:0009379">
    <property type="term" value="C:Holliday junction helicase complex"/>
    <property type="evidence" value="ECO:0007669"/>
    <property type="project" value="InterPro"/>
</dbReference>
<dbReference type="GO" id="GO:0048476">
    <property type="term" value="C:Holliday junction resolvase complex"/>
    <property type="evidence" value="ECO:0007669"/>
    <property type="project" value="UniProtKB-UniRule"/>
</dbReference>
<dbReference type="GO" id="GO:0005524">
    <property type="term" value="F:ATP binding"/>
    <property type="evidence" value="ECO:0007669"/>
    <property type="project" value="InterPro"/>
</dbReference>
<dbReference type="GO" id="GO:0000400">
    <property type="term" value="F:four-way junction DNA binding"/>
    <property type="evidence" value="ECO:0007669"/>
    <property type="project" value="UniProtKB-UniRule"/>
</dbReference>
<dbReference type="GO" id="GO:0009378">
    <property type="term" value="F:four-way junction helicase activity"/>
    <property type="evidence" value="ECO:0007669"/>
    <property type="project" value="InterPro"/>
</dbReference>
<dbReference type="GO" id="GO:0006310">
    <property type="term" value="P:DNA recombination"/>
    <property type="evidence" value="ECO:0007669"/>
    <property type="project" value="UniProtKB-UniRule"/>
</dbReference>
<dbReference type="GO" id="GO:0006281">
    <property type="term" value="P:DNA repair"/>
    <property type="evidence" value="ECO:0007669"/>
    <property type="project" value="UniProtKB-UniRule"/>
</dbReference>
<dbReference type="CDD" id="cd14332">
    <property type="entry name" value="UBA_RuvA_C"/>
    <property type="match status" value="1"/>
</dbReference>
<dbReference type="Gene3D" id="1.10.150.20">
    <property type="entry name" value="5' to 3' exonuclease, C-terminal subdomain"/>
    <property type="match status" value="1"/>
</dbReference>
<dbReference type="Gene3D" id="1.10.8.10">
    <property type="entry name" value="DNA helicase RuvA subunit, C-terminal domain"/>
    <property type="match status" value="1"/>
</dbReference>
<dbReference type="Gene3D" id="2.40.50.140">
    <property type="entry name" value="Nucleic acid-binding proteins"/>
    <property type="match status" value="1"/>
</dbReference>
<dbReference type="HAMAP" id="MF_00031">
    <property type="entry name" value="DNA_HJ_migration_RuvA"/>
    <property type="match status" value="1"/>
</dbReference>
<dbReference type="InterPro" id="IPR013849">
    <property type="entry name" value="DNA_helicase_Holl-junc_RuvA_I"/>
</dbReference>
<dbReference type="InterPro" id="IPR003583">
    <property type="entry name" value="Hlx-hairpin-Hlx_DNA-bd_motif"/>
</dbReference>
<dbReference type="InterPro" id="IPR012340">
    <property type="entry name" value="NA-bd_OB-fold"/>
</dbReference>
<dbReference type="InterPro" id="IPR000085">
    <property type="entry name" value="RuvA"/>
</dbReference>
<dbReference type="InterPro" id="IPR010994">
    <property type="entry name" value="RuvA_2-like"/>
</dbReference>
<dbReference type="InterPro" id="IPR011114">
    <property type="entry name" value="RuvA_C"/>
</dbReference>
<dbReference type="InterPro" id="IPR036267">
    <property type="entry name" value="RuvA_C_sf"/>
</dbReference>
<dbReference type="NCBIfam" id="TIGR00084">
    <property type="entry name" value="ruvA"/>
    <property type="match status" value="1"/>
</dbReference>
<dbReference type="Pfam" id="PF14520">
    <property type="entry name" value="HHH_5"/>
    <property type="match status" value="1"/>
</dbReference>
<dbReference type="Pfam" id="PF07499">
    <property type="entry name" value="RuvA_C"/>
    <property type="match status" value="1"/>
</dbReference>
<dbReference type="Pfam" id="PF01330">
    <property type="entry name" value="RuvA_N"/>
    <property type="match status" value="1"/>
</dbReference>
<dbReference type="SMART" id="SM00278">
    <property type="entry name" value="HhH1"/>
    <property type="match status" value="2"/>
</dbReference>
<dbReference type="SUPFAM" id="SSF46929">
    <property type="entry name" value="DNA helicase RuvA subunit, C-terminal domain"/>
    <property type="match status" value="1"/>
</dbReference>
<dbReference type="SUPFAM" id="SSF50249">
    <property type="entry name" value="Nucleic acid-binding proteins"/>
    <property type="match status" value="1"/>
</dbReference>
<dbReference type="SUPFAM" id="SSF47781">
    <property type="entry name" value="RuvA domain 2-like"/>
    <property type="match status" value="1"/>
</dbReference>
<accession>B9L9P0</accession>
<proteinExistence type="inferred from homology"/>